<sequence>MRLVTLAPAKVNLVLRVGPVRADGYHDLRTLMVPLDLGDRVDVRVSARPGPVRCTVPGRPELDGPENLAARAAEAFRRRFGVDRAVSIRIEKRTPVTAGLGGGSSDAAAVLRCLARALRVRDGAALAALALEIGSDVPFFLGPGPAWAAGRGERLSRAEVPPLDLVLVYPADPSLAIRAGDAYRWLDEARASGSQAPRRLGRPGRWRPTLLGNDLQAPCVARKPALQALLGLLVGAGATAAIMSGSGPTVFGIFPGRGAARGAALAIQGRAKGGAAGVQVLLARTVRRHPRVSPWRSPRSASSRSTRRSSRPT</sequence>
<evidence type="ECO:0000255" key="1">
    <source>
        <dbReference type="HAMAP-Rule" id="MF_00061"/>
    </source>
</evidence>
<evidence type="ECO:0000256" key="2">
    <source>
        <dbReference type="SAM" id="MobiDB-lite"/>
    </source>
</evidence>
<comment type="function">
    <text evidence="1">Catalyzes the phosphorylation of the position 2 hydroxy group of 4-diphosphocytidyl-2C-methyl-D-erythritol.</text>
</comment>
<comment type="catalytic activity">
    <reaction evidence="1">
        <text>4-CDP-2-C-methyl-D-erythritol + ATP = 4-CDP-2-C-methyl-D-erythritol 2-phosphate + ADP + H(+)</text>
        <dbReference type="Rhea" id="RHEA:18437"/>
        <dbReference type="ChEBI" id="CHEBI:15378"/>
        <dbReference type="ChEBI" id="CHEBI:30616"/>
        <dbReference type="ChEBI" id="CHEBI:57823"/>
        <dbReference type="ChEBI" id="CHEBI:57919"/>
        <dbReference type="ChEBI" id="CHEBI:456216"/>
        <dbReference type="EC" id="2.7.1.148"/>
    </reaction>
</comment>
<comment type="pathway">
    <text evidence="1">Isoprenoid biosynthesis; isopentenyl diphosphate biosynthesis via DXP pathway; isopentenyl diphosphate from 1-deoxy-D-xylulose 5-phosphate: step 3/6.</text>
</comment>
<comment type="similarity">
    <text evidence="1">Belongs to the GHMP kinase family. IspE subfamily.</text>
</comment>
<keyword id="KW-0067">ATP-binding</keyword>
<keyword id="KW-0414">Isoprene biosynthesis</keyword>
<keyword id="KW-0418">Kinase</keyword>
<keyword id="KW-0547">Nucleotide-binding</keyword>
<keyword id="KW-0808">Transferase</keyword>
<proteinExistence type="inferred from homology"/>
<reference key="1">
    <citation type="submission" date="2008-08" db="EMBL/GenBank/DDBJ databases">
        <title>Complete sequence of Anaeromyxobacter sp. K.</title>
        <authorList>
            <consortium name="US DOE Joint Genome Institute"/>
            <person name="Lucas S."/>
            <person name="Copeland A."/>
            <person name="Lapidus A."/>
            <person name="Glavina del Rio T."/>
            <person name="Dalin E."/>
            <person name="Tice H."/>
            <person name="Bruce D."/>
            <person name="Goodwin L."/>
            <person name="Pitluck S."/>
            <person name="Saunders E."/>
            <person name="Brettin T."/>
            <person name="Detter J.C."/>
            <person name="Han C."/>
            <person name="Larimer F."/>
            <person name="Land M."/>
            <person name="Hauser L."/>
            <person name="Kyrpides N."/>
            <person name="Ovchinnikiva G."/>
            <person name="Beliaev A."/>
        </authorList>
    </citation>
    <scope>NUCLEOTIDE SEQUENCE [LARGE SCALE GENOMIC DNA]</scope>
    <source>
        <strain>K</strain>
    </source>
</reference>
<gene>
    <name evidence="1" type="primary">ispE</name>
    <name type="ordered locus">AnaeK_0130</name>
</gene>
<protein>
    <recommendedName>
        <fullName evidence="1">4-diphosphocytidyl-2-C-methyl-D-erythritol kinase</fullName>
        <shortName evidence="1">CMK</shortName>
        <ecNumber evidence="1">2.7.1.148</ecNumber>
    </recommendedName>
    <alternativeName>
        <fullName evidence="1">4-(cytidine-5'-diphospho)-2-C-methyl-D-erythritol kinase</fullName>
    </alternativeName>
</protein>
<organism>
    <name type="scientific">Anaeromyxobacter sp. (strain K)</name>
    <dbReference type="NCBI Taxonomy" id="447217"/>
    <lineage>
        <taxon>Bacteria</taxon>
        <taxon>Pseudomonadati</taxon>
        <taxon>Myxococcota</taxon>
        <taxon>Myxococcia</taxon>
        <taxon>Myxococcales</taxon>
        <taxon>Cystobacterineae</taxon>
        <taxon>Anaeromyxobacteraceae</taxon>
        <taxon>Anaeromyxobacter</taxon>
    </lineage>
</organism>
<feature type="chain" id="PRO_1000092060" description="4-diphosphocytidyl-2-C-methyl-D-erythritol kinase">
    <location>
        <begin position="1"/>
        <end position="313"/>
    </location>
</feature>
<feature type="region of interest" description="Disordered" evidence="2">
    <location>
        <begin position="289"/>
        <end position="313"/>
    </location>
</feature>
<feature type="compositionally biased region" description="Low complexity" evidence="2">
    <location>
        <begin position="292"/>
        <end position="304"/>
    </location>
</feature>
<feature type="active site" evidence="1">
    <location>
        <position position="10"/>
    </location>
</feature>
<feature type="active site" evidence="1">
    <location>
        <position position="136"/>
    </location>
</feature>
<feature type="binding site" evidence="1">
    <location>
        <begin position="95"/>
        <end position="105"/>
    </location>
    <ligand>
        <name>ATP</name>
        <dbReference type="ChEBI" id="CHEBI:30616"/>
    </ligand>
</feature>
<dbReference type="EC" id="2.7.1.148" evidence="1"/>
<dbReference type="EMBL" id="CP001131">
    <property type="protein sequence ID" value="ACG71373.1"/>
    <property type="molecule type" value="Genomic_DNA"/>
</dbReference>
<dbReference type="RefSeq" id="WP_012524209.1">
    <property type="nucleotide sequence ID" value="NC_011145.1"/>
</dbReference>
<dbReference type="SMR" id="B4ULC6"/>
<dbReference type="KEGG" id="ank:AnaeK_0130"/>
<dbReference type="HOGENOM" id="CLU_053057_1_1_7"/>
<dbReference type="OrthoDB" id="9809438at2"/>
<dbReference type="UniPathway" id="UPA00056">
    <property type="reaction ID" value="UER00094"/>
</dbReference>
<dbReference type="Proteomes" id="UP000001871">
    <property type="component" value="Chromosome"/>
</dbReference>
<dbReference type="GO" id="GO:0050515">
    <property type="term" value="F:4-(cytidine 5'-diphospho)-2-C-methyl-D-erythritol kinase activity"/>
    <property type="evidence" value="ECO:0007669"/>
    <property type="project" value="UniProtKB-UniRule"/>
</dbReference>
<dbReference type="GO" id="GO:0005524">
    <property type="term" value="F:ATP binding"/>
    <property type="evidence" value="ECO:0007669"/>
    <property type="project" value="UniProtKB-UniRule"/>
</dbReference>
<dbReference type="GO" id="GO:0019288">
    <property type="term" value="P:isopentenyl diphosphate biosynthetic process, methylerythritol 4-phosphate pathway"/>
    <property type="evidence" value="ECO:0007669"/>
    <property type="project" value="UniProtKB-UniRule"/>
</dbReference>
<dbReference type="GO" id="GO:0016114">
    <property type="term" value="P:terpenoid biosynthetic process"/>
    <property type="evidence" value="ECO:0007669"/>
    <property type="project" value="InterPro"/>
</dbReference>
<dbReference type="Gene3D" id="3.30.230.10">
    <property type="match status" value="1"/>
</dbReference>
<dbReference type="Gene3D" id="3.30.70.890">
    <property type="entry name" value="GHMP kinase, C-terminal domain"/>
    <property type="match status" value="1"/>
</dbReference>
<dbReference type="HAMAP" id="MF_00061">
    <property type="entry name" value="IspE"/>
    <property type="match status" value="1"/>
</dbReference>
<dbReference type="InterPro" id="IPR013750">
    <property type="entry name" value="GHMP_kinase_C_dom"/>
</dbReference>
<dbReference type="InterPro" id="IPR036554">
    <property type="entry name" value="GHMP_kinase_C_sf"/>
</dbReference>
<dbReference type="InterPro" id="IPR006204">
    <property type="entry name" value="GHMP_kinase_N_dom"/>
</dbReference>
<dbReference type="InterPro" id="IPR004424">
    <property type="entry name" value="IspE"/>
</dbReference>
<dbReference type="InterPro" id="IPR020568">
    <property type="entry name" value="Ribosomal_Su5_D2-typ_SF"/>
</dbReference>
<dbReference type="InterPro" id="IPR014721">
    <property type="entry name" value="Ribsml_uS5_D2-typ_fold_subgr"/>
</dbReference>
<dbReference type="NCBIfam" id="TIGR00154">
    <property type="entry name" value="ispE"/>
    <property type="match status" value="1"/>
</dbReference>
<dbReference type="PANTHER" id="PTHR43527">
    <property type="entry name" value="4-DIPHOSPHOCYTIDYL-2-C-METHYL-D-ERYTHRITOL KINASE, CHLOROPLASTIC"/>
    <property type="match status" value="1"/>
</dbReference>
<dbReference type="PANTHER" id="PTHR43527:SF2">
    <property type="entry name" value="4-DIPHOSPHOCYTIDYL-2-C-METHYL-D-ERYTHRITOL KINASE, CHLOROPLASTIC"/>
    <property type="match status" value="1"/>
</dbReference>
<dbReference type="Pfam" id="PF08544">
    <property type="entry name" value="GHMP_kinases_C"/>
    <property type="match status" value="1"/>
</dbReference>
<dbReference type="Pfam" id="PF00288">
    <property type="entry name" value="GHMP_kinases_N"/>
    <property type="match status" value="1"/>
</dbReference>
<dbReference type="PIRSF" id="PIRSF010376">
    <property type="entry name" value="IspE"/>
    <property type="match status" value="1"/>
</dbReference>
<dbReference type="SUPFAM" id="SSF55060">
    <property type="entry name" value="GHMP Kinase, C-terminal domain"/>
    <property type="match status" value="1"/>
</dbReference>
<dbReference type="SUPFAM" id="SSF54211">
    <property type="entry name" value="Ribosomal protein S5 domain 2-like"/>
    <property type="match status" value="1"/>
</dbReference>
<accession>B4ULC6</accession>
<name>ISPE_ANASK</name>